<evidence type="ECO:0000255" key="1">
    <source>
        <dbReference type="HAMAP-Rule" id="MF_00291"/>
    </source>
</evidence>
<evidence type="ECO:0000305" key="2"/>
<name>RS2_STRA1</name>
<keyword id="KW-0687">Ribonucleoprotein</keyword>
<keyword id="KW-0689">Ribosomal protein</keyword>
<reference key="1">
    <citation type="journal article" date="2005" name="Proc. Natl. Acad. Sci. U.S.A.">
        <title>Genome analysis of multiple pathogenic isolates of Streptococcus agalactiae: implications for the microbial 'pan-genome'.</title>
        <authorList>
            <person name="Tettelin H."/>
            <person name="Masignani V."/>
            <person name="Cieslewicz M.J."/>
            <person name="Donati C."/>
            <person name="Medini D."/>
            <person name="Ward N.L."/>
            <person name="Angiuoli S.V."/>
            <person name="Crabtree J."/>
            <person name="Jones A.L."/>
            <person name="Durkin A.S."/>
            <person name="DeBoy R.T."/>
            <person name="Davidsen T.M."/>
            <person name="Mora M."/>
            <person name="Scarselli M."/>
            <person name="Margarit y Ros I."/>
            <person name="Peterson J.D."/>
            <person name="Hauser C.R."/>
            <person name="Sundaram J.P."/>
            <person name="Nelson W.C."/>
            <person name="Madupu R."/>
            <person name="Brinkac L.M."/>
            <person name="Dodson R.J."/>
            <person name="Rosovitz M.J."/>
            <person name="Sullivan S.A."/>
            <person name="Daugherty S.C."/>
            <person name="Haft D.H."/>
            <person name="Selengut J."/>
            <person name="Gwinn M.L."/>
            <person name="Zhou L."/>
            <person name="Zafar N."/>
            <person name="Khouri H."/>
            <person name="Radune D."/>
            <person name="Dimitrov G."/>
            <person name="Watkins K."/>
            <person name="O'Connor K.J."/>
            <person name="Smith S."/>
            <person name="Utterback T.R."/>
            <person name="White O."/>
            <person name="Rubens C.E."/>
            <person name="Grandi G."/>
            <person name="Madoff L.C."/>
            <person name="Kasper D.L."/>
            <person name="Telford J.L."/>
            <person name="Wessels M.R."/>
            <person name="Rappuoli R."/>
            <person name="Fraser C.M."/>
        </authorList>
    </citation>
    <scope>NUCLEOTIDE SEQUENCE [LARGE SCALE GENOMIC DNA]</scope>
    <source>
        <strain>ATCC 27591 / A909 / CDC SS700</strain>
    </source>
</reference>
<proteinExistence type="inferred from homology"/>
<accession>Q3JZ54</accession>
<comment type="similarity">
    <text evidence="1">Belongs to the universal ribosomal protein uS2 family.</text>
</comment>
<sequence length="256" mass="28629">MAVISMKQLLEAGVHFGHQTRRWNPKMAKYIFTERNGIHVIDLQQTVKLADQAYEFVRDAAANDAVILFVGTKKQAAEAVAEEAKRAGQYFINHRWLGGTLTNWGTIQKRIARLKEIKRMEEEGTFELLPKKEVALLNKQRARLEKFLGGIEDMPRIPDVMYVVDPHKEQIAVKEAKKLGIPVVAMVDTNADPDDIDVIIPANDDAIRAVKLITSKLADAVIEGRQGEDADVDFAQEAQADSIEEIVEVVEGSKND</sequence>
<dbReference type="EMBL" id="CP000114">
    <property type="protein sequence ID" value="ABA44786.1"/>
    <property type="molecule type" value="Genomic_DNA"/>
</dbReference>
<dbReference type="RefSeq" id="WP_000268453.1">
    <property type="nucleotide sequence ID" value="NC_007432.1"/>
</dbReference>
<dbReference type="SMR" id="Q3JZ54"/>
<dbReference type="KEGG" id="sak:SAK_1852"/>
<dbReference type="HOGENOM" id="CLU_040318_1_2_9"/>
<dbReference type="GO" id="GO:0022627">
    <property type="term" value="C:cytosolic small ribosomal subunit"/>
    <property type="evidence" value="ECO:0007669"/>
    <property type="project" value="TreeGrafter"/>
</dbReference>
<dbReference type="GO" id="GO:0003735">
    <property type="term" value="F:structural constituent of ribosome"/>
    <property type="evidence" value="ECO:0007669"/>
    <property type="project" value="InterPro"/>
</dbReference>
<dbReference type="GO" id="GO:0006412">
    <property type="term" value="P:translation"/>
    <property type="evidence" value="ECO:0007669"/>
    <property type="project" value="UniProtKB-UniRule"/>
</dbReference>
<dbReference type="CDD" id="cd01425">
    <property type="entry name" value="RPS2"/>
    <property type="match status" value="1"/>
</dbReference>
<dbReference type="FunFam" id="1.10.287.610:FF:000001">
    <property type="entry name" value="30S ribosomal protein S2"/>
    <property type="match status" value="1"/>
</dbReference>
<dbReference type="Gene3D" id="3.40.50.10490">
    <property type="entry name" value="Glucose-6-phosphate isomerase like protein, domain 1"/>
    <property type="match status" value="1"/>
</dbReference>
<dbReference type="Gene3D" id="1.10.287.610">
    <property type="entry name" value="Helix hairpin bin"/>
    <property type="match status" value="1"/>
</dbReference>
<dbReference type="HAMAP" id="MF_00291_B">
    <property type="entry name" value="Ribosomal_uS2_B"/>
    <property type="match status" value="1"/>
</dbReference>
<dbReference type="InterPro" id="IPR001865">
    <property type="entry name" value="Ribosomal_uS2"/>
</dbReference>
<dbReference type="InterPro" id="IPR005706">
    <property type="entry name" value="Ribosomal_uS2_bac/mit/plastid"/>
</dbReference>
<dbReference type="InterPro" id="IPR018130">
    <property type="entry name" value="Ribosomal_uS2_CS"/>
</dbReference>
<dbReference type="InterPro" id="IPR023591">
    <property type="entry name" value="Ribosomal_uS2_flav_dom_sf"/>
</dbReference>
<dbReference type="NCBIfam" id="TIGR01011">
    <property type="entry name" value="rpsB_bact"/>
    <property type="match status" value="1"/>
</dbReference>
<dbReference type="PANTHER" id="PTHR12534">
    <property type="entry name" value="30S RIBOSOMAL PROTEIN S2 PROKARYOTIC AND ORGANELLAR"/>
    <property type="match status" value="1"/>
</dbReference>
<dbReference type="PANTHER" id="PTHR12534:SF0">
    <property type="entry name" value="SMALL RIBOSOMAL SUBUNIT PROTEIN US2M"/>
    <property type="match status" value="1"/>
</dbReference>
<dbReference type="Pfam" id="PF00318">
    <property type="entry name" value="Ribosomal_S2"/>
    <property type="match status" value="1"/>
</dbReference>
<dbReference type="PRINTS" id="PR00395">
    <property type="entry name" value="RIBOSOMALS2"/>
</dbReference>
<dbReference type="SUPFAM" id="SSF52313">
    <property type="entry name" value="Ribosomal protein S2"/>
    <property type="match status" value="1"/>
</dbReference>
<dbReference type="PROSITE" id="PS00962">
    <property type="entry name" value="RIBOSOMAL_S2_1"/>
    <property type="match status" value="1"/>
</dbReference>
<gene>
    <name evidence="1" type="primary">rpsB</name>
    <name type="ordered locus">SAK_1852</name>
</gene>
<organism>
    <name type="scientific">Streptococcus agalactiae serotype Ia (strain ATCC 27591 / A909 / CDC SS700)</name>
    <dbReference type="NCBI Taxonomy" id="205921"/>
    <lineage>
        <taxon>Bacteria</taxon>
        <taxon>Bacillati</taxon>
        <taxon>Bacillota</taxon>
        <taxon>Bacilli</taxon>
        <taxon>Lactobacillales</taxon>
        <taxon>Streptococcaceae</taxon>
        <taxon>Streptococcus</taxon>
    </lineage>
</organism>
<protein>
    <recommendedName>
        <fullName evidence="1">Small ribosomal subunit protein uS2</fullName>
    </recommendedName>
    <alternativeName>
        <fullName evidence="2">30S ribosomal protein S2</fullName>
    </alternativeName>
</protein>
<feature type="chain" id="PRO_1000004085" description="Small ribosomal subunit protein uS2">
    <location>
        <begin position="1"/>
        <end position="256"/>
    </location>
</feature>